<organism>
    <name type="scientific">Methylococcus capsulatus (strain ATCC 33009 / NCIMB 11132 / Bath)</name>
    <dbReference type="NCBI Taxonomy" id="243233"/>
    <lineage>
        <taxon>Bacteria</taxon>
        <taxon>Pseudomonadati</taxon>
        <taxon>Pseudomonadota</taxon>
        <taxon>Gammaproteobacteria</taxon>
        <taxon>Methylococcales</taxon>
        <taxon>Methylococcaceae</taxon>
        <taxon>Methylococcus</taxon>
    </lineage>
</organism>
<dbReference type="EMBL" id="AE017282">
    <property type="protein sequence ID" value="AAU91905.1"/>
    <property type="molecule type" value="Genomic_DNA"/>
</dbReference>
<dbReference type="RefSeq" id="WP_010961110.1">
    <property type="nucleotide sequence ID" value="NC_002977.6"/>
</dbReference>
<dbReference type="SMR" id="Q607A3"/>
<dbReference type="STRING" id="243233.MCA1858"/>
<dbReference type="GeneID" id="88224103"/>
<dbReference type="KEGG" id="mca:MCA1858"/>
<dbReference type="eggNOG" id="COG1420">
    <property type="taxonomic scope" value="Bacteria"/>
</dbReference>
<dbReference type="HOGENOM" id="CLU_050019_0_0_6"/>
<dbReference type="Proteomes" id="UP000006821">
    <property type="component" value="Chromosome"/>
</dbReference>
<dbReference type="GO" id="GO:0003677">
    <property type="term" value="F:DNA binding"/>
    <property type="evidence" value="ECO:0007669"/>
    <property type="project" value="InterPro"/>
</dbReference>
<dbReference type="GO" id="GO:0045892">
    <property type="term" value="P:negative regulation of DNA-templated transcription"/>
    <property type="evidence" value="ECO:0007669"/>
    <property type="project" value="UniProtKB-UniRule"/>
</dbReference>
<dbReference type="Gene3D" id="3.30.450.40">
    <property type="match status" value="1"/>
</dbReference>
<dbReference type="Gene3D" id="3.30.390.60">
    <property type="entry name" value="Heat-inducible transcription repressor hrca homolog, domain 3"/>
    <property type="match status" value="1"/>
</dbReference>
<dbReference type="Gene3D" id="1.10.10.10">
    <property type="entry name" value="Winged helix-like DNA-binding domain superfamily/Winged helix DNA-binding domain"/>
    <property type="match status" value="1"/>
</dbReference>
<dbReference type="HAMAP" id="MF_00081">
    <property type="entry name" value="HrcA"/>
    <property type="match status" value="1"/>
</dbReference>
<dbReference type="InterPro" id="IPR029016">
    <property type="entry name" value="GAF-like_dom_sf"/>
</dbReference>
<dbReference type="InterPro" id="IPR002571">
    <property type="entry name" value="HrcA"/>
</dbReference>
<dbReference type="InterPro" id="IPR021153">
    <property type="entry name" value="HrcA_C"/>
</dbReference>
<dbReference type="InterPro" id="IPR036388">
    <property type="entry name" value="WH-like_DNA-bd_sf"/>
</dbReference>
<dbReference type="InterPro" id="IPR036390">
    <property type="entry name" value="WH_DNA-bd_sf"/>
</dbReference>
<dbReference type="InterPro" id="IPR005104">
    <property type="entry name" value="WHTH_HrcA_DNA-bd"/>
</dbReference>
<dbReference type="InterPro" id="IPR023120">
    <property type="entry name" value="WHTH_transcript_rep_HrcA_IDD"/>
</dbReference>
<dbReference type="NCBIfam" id="TIGR00331">
    <property type="entry name" value="hrcA"/>
    <property type="match status" value="1"/>
</dbReference>
<dbReference type="PANTHER" id="PTHR34824">
    <property type="entry name" value="HEAT-INDUCIBLE TRANSCRIPTION REPRESSOR HRCA"/>
    <property type="match status" value="1"/>
</dbReference>
<dbReference type="PANTHER" id="PTHR34824:SF1">
    <property type="entry name" value="HEAT-INDUCIBLE TRANSCRIPTION REPRESSOR HRCA"/>
    <property type="match status" value="1"/>
</dbReference>
<dbReference type="Pfam" id="PF01628">
    <property type="entry name" value="HrcA"/>
    <property type="match status" value="1"/>
</dbReference>
<dbReference type="Pfam" id="PF03444">
    <property type="entry name" value="HrcA_DNA-bdg"/>
    <property type="match status" value="1"/>
</dbReference>
<dbReference type="PIRSF" id="PIRSF005485">
    <property type="entry name" value="HrcA"/>
    <property type="match status" value="1"/>
</dbReference>
<dbReference type="SUPFAM" id="SSF55781">
    <property type="entry name" value="GAF domain-like"/>
    <property type="match status" value="1"/>
</dbReference>
<dbReference type="SUPFAM" id="SSF46785">
    <property type="entry name" value="Winged helix' DNA-binding domain"/>
    <property type="match status" value="1"/>
</dbReference>
<proteinExistence type="inferred from homology"/>
<comment type="function">
    <text evidence="1">Negative regulator of class I heat shock genes (grpE-dnaK-dnaJ and groELS operons). Prevents heat-shock induction of these operons.</text>
</comment>
<comment type="similarity">
    <text evidence="1">Belongs to the HrcA family.</text>
</comment>
<evidence type="ECO:0000255" key="1">
    <source>
        <dbReference type="HAMAP-Rule" id="MF_00081"/>
    </source>
</evidence>
<accession>Q607A3</accession>
<reference key="1">
    <citation type="journal article" date="2004" name="PLoS Biol.">
        <title>Genomic insights into methanotrophy: the complete genome sequence of Methylococcus capsulatus (Bath).</title>
        <authorList>
            <person name="Ward N.L."/>
            <person name="Larsen O."/>
            <person name="Sakwa J."/>
            <person name="Bruseth L."/>
            <person name="Khouri H.M."/>
            <person name="Durkin A.S."/>
            <person name="Dimitrov G."/>
            <person name="Jiang L."/>
            <person name="Scanlan D."/>
            <person name="Kang K.H."/>
            <person name="Lewis M.R."/>
            <person name="Nelson K.E."/>
            <person name="Methe B.A."/>
            <person name="Wu M."/>
            <person name="Heidelberg J.F."/>
            <person name="Paulsen I.T."/>
            <person name="Fouts D.E."/>
            <person name="Ravel J."/>
            <person name="Tettelin H."/>
            <person name="Ren Q."/>
            <person name="Read T.D."/>
            <person name="DeBoy R.T."/>
            <person name="Seshadri R."/>
            <person name="Salzberg S.L."/>
            <person name="Jensen H.B."/>
            <person name="Birkeland N.K."/>
            <person name="Nelson W.C."/>
            <person name="Dodson R.J."/>
            <person name="Grindhaug S.H."/>
            <person name="Holt I.E."/>
            <person name="Eidhammer I."/>
            <person name="Jonasen I."/>
            <person name="Vanaken S."/>
            <person name="Utterback T.R."/>
            <person name="Feldblyum T.V."/>
            <person name="Fraser C.M."/>
            <person name="Lillehaug J.R."/>
            <person name="Eisen J.A."/>
        </authorList>
    </citation>
    <scope>NUCLEOTIDE SEQUENCE [LARGE SCALE GENOMIC DNA]</scope>
    <source>
        <strain>ATCC 33009 / NCIMB 11132 / Bath</strain>
    </source>
</reference>
<feature type="chain" id="PRO_0000182499" description="Heat-inducible transcription repressor HrcA">
    <location>
        <begin position="1"/>
        <end position="350"/>
    </location>
</feature>
<keyword id="KW-1185">Reference proteome</keyword>
<keyword id="KW-0678">Repressor</keyword>
<keyword id="KW-0346">Stress response</keyword>
<keyword id="KW-0804">Transcription</keyword>
<keyword id="KW-0805">Transcription regulation</keyword>
<name>HRCA_METCA</name>
<sequence length="350" mass="38678">MASFPELSERAQQLLKALVERYIGEGQPVGSRVLARDAGLSPATIRNVMADLEELGLITSPHTSAGRLPTVSGYRLFVDSLLTVKPLHQAIVDQLWLDLESRENPRDLLETASKLLSELTHMACIISMPRRETLVFQHIEFLPLSDNRVLAILVTSDQEIHNKIIHTPHKFSAAELQTAANFFNAVCGGKDMVSAREHLRAELAKERDRLSEQLLQAGEIAEQALAEGGRSRKPFLVRGETNLMDFVELADVDRLRGLFEAFRQKESIVGLLDRCLESPGVKIIIGEESGFRPLEPCSLVTASYSVDNRVMGVLGVIGPTRMKYERVIPLVDVTAKLVGAALNQRTLAPT</sequence>
<protein>
    <recommendedName>
        <fullName evidence="1">Heat-inducible transcription repressor HrcA</fullName>
    </recommendedName>
</protein>
<gene>
    <name evidence="1" type="primary">hrcA</name>
    <name type="ordered locus">MCA1858</name>
</gene>